<evidence type="ECO:0000255" key="1">
    <source>
        <dbReference type="HAMAP-Rule" id="MF_00203"/>
    </source>
</evidence>
<keyword id="KW-0963">Cytoplasm</keyword>
<keyword id="KW-0227">DNA damage</keyword>
<keyword id="KW-0228">DNA excision</keyword>
<keyword id="KW-0234">DNA repair</keyword>
<keyword id="KW-0267">Excision nuclease</keyword>
<keyword id="KW-0742">SOS response</keyword>
<protein>
    <recommendedName>
        <fullName evidence="1">UvrABC system protein C</fullName>
        <shortName evidence="1">Protein UvrC</shortName>
    </recommendedName>
    <alternativeName>
        <fullName evidence="1">Excinuclease ABC subunit C</fullName>
    </alternativeName>
</protein>
<reference key="1">
    <citation type="submission" date="2002-12" db="EMBL/GenBank/DDBJ databases">
        <title>Complete genome sequence of Vibrio vulnificus CMCP6.</title>
        <authorList>
            <person name="Rhee J.H."/>
            <person name="Kim S.Y."/>
            <person name="Chung S.S."/>
            <person name="Kim J.J."/>
            <person name="Moon Y.H."/>
            <person name="Jeong H."/>
            <person name="Choy H.E."/>
        </authorList>
    </citation>
    <scope>NUCLEOTIDE SEQUENCE [LARGE SCALE GENOMIC DNA]</scope>
    <source>
        <strain>CMCP6</strain>
    </source>
</reference>
<dbReference type="EMBL" id="AE016795">
    <property type="protein sequence ID" value="AAO11377.2"/>
    <property type="molecule type" value="Genomic_DNA"/>
</dbReference>
<dbReference type="RefSeq" id="WP_011080856.1">
    <property type="nucleotide sequence ID" value="NC_004459.3"/>
</dbReference>
<dbReference type="SMR" id="Q8D8C7"/>
<dbReference type="KEGG" id="vvu:VV1_3053"/>
<dbReference type="HOGENOM" id="CLU_014841_3_0_6"/>
<dbReference type="Proteomes" id="UP000002275">
    <property type="component" value="Chromosome 1"/>
</dbReference>
<dbReference type="GO" id="GO:0005737">
    <property type="term" value="C:cytoplasm"/>
    <property type="evidence" value="ECO:0007669"/>
    <property type="project" value="UniProtKB-SubCell"/>
</dbReference>
<dbReference type="GO" id="GO:0009380">
    <property type="term" value="C:excinuclease repair complex"/>
    <property type="evidence" value="ECO:0007669"/>
    <property type="project" value="InterPro"/>
</dbReference>
<dbReference type="GO" id="GO:0003677">
    <property type="term" value="F:DNA binding"/>
    <property type="evidence" value="ECO:0007669"/>
    <property type="project" value="UniProtKB-UniRule"/>
</dbReference>
<dbReference type="GO" id="GO:0009381">
    <property type="term" value="F:excinuclease ABC activity"/>
    <property type="evidence" value="ECO:0007669"/>
    <property type="project" value="UniProtKB-UniRule"/>
</dbReference>
<dbReference type="GO" id="GO:0006289">
    <property type="term" value="P:nucleotide-excision repair"/>
    <property type="evidence" value="ECO:0007669"/>
    <property type="project" value="UniProtKB-UniRule"/>
</dbReference>
<dbReference type="GO" id="GO:0009432">
    <property type="term" value="P:SOS response"/>
    <property type="evidence" value="ECO:0007669"/>
    <property type="project" value="UniProtKB-UniRule"/>
</dbReference>
<dbReference type="CDD" id="cd10434">
    <property type="entry name" value="GIY-YIG_UvrC_Cho"/>
    <property type="match status" value="1"/>
</dbReference>
<dbReference type="FunFam" id="1.10.150.20:FF:000005">
    <property type="entry name" value="UvrABC system protein C"/>
    <property type="match status" value="1"/>
</dbReference>
<dbReference type="FunFam" id="3.30.420.340:FF:000001">
    <property type="entry name" value="UvrABC system protein C"/>
    <property type="match status" value="1"/>
</dbReference>
<dbReference type="FunFam" id="3.40.1440.10:FF:000001">
    <property type="entry name" value="UvrABC system protein C"/>
    <property type="match status" value="1"/>
</dbReference>
<dbReference type="FunFam" id="4.10.860.10:FF:000002">
    <property type="entry name" value="UvrABC system protein C"/>
    <property type="match status" value="1"/>
</dbReference>
<dbReference type="Gene3D" id="1.10.150.20">
    <property type="entry name" value="5' to 3' exonuclease, C-terminal subdomain"/>
    <property type="match status" value="1"/>
</dbReference>
<dbReference type="Gene3D" id="3.40.1440.10">
    <property type="entry name" value="GIY-YIG endonuclease"/>
    <property type="match status" value="1"/>
</dbReference>
<dbReference type="Gene3D" id="4.10.860.10">
    <property type="entry name" value="UVR domain"/>
    <property type="match status" value="1"/>
</dbReference>
<dbReference type="Gene3D" id="3.30.420.340">
    <property type="entry name" value="UvrC, RNAse H endonuclease domain"/>
    <property type="match status" value="1"/>
</dbReference>
<dbReference type="HAMAP" id="MF_00203">
    <property type="entry name" value="UvrC"/>
    <property type="match status" value="1"/>
</dbReference>
<dbReference type="InterPro" id="IPR000305">
    <property type="entry name" value="GIY-YIG_endonuc"/>
</dbReference>
<dbReference type="InterPro" id="IPR035901">
    <property type="entry name" value="GIY-YIG_endonuc_sf"/>
</dbReference>
<dbReference type="InterPro" id="IPR047296">
    <property type="entry name" value="GIY-YIG_UvrC_Cho"/>
</dbReference>
<dbReference type="InterPro" id="IPR003583">
    <property type="entry name" value="Hlx-hairpin-Hlx_DNA-bd_motif"/>
</dbReference>
<dbReference type="InterPro" id="IPR010994">
    <property type="entry name" value="RuvA_2-like"/>
</dbReference>
<dbReference type="InterPro" id="IPR001943">
    <property type="entry name" value="UVR_dom"/>
</dbReference>
<dbReference type="InterPro" id="IPR036876">
    <property type="entry name" value="UVR_dom_sf"/>
</dbReference>
<dbReference type="InterPro" id="IPR050066">
    <property type="entry name" value="UvrABC_protein_C"/>
</dbReference>
<dbReference type="InterPro" id="IPR004791">
    <property type="entry name" value="UvrC"/>
</dbReference>
<dbReference type="InterPro" id="IPR001162">
    <property type="entry name" value="UvrC_RNase_H_dom"/>
</dbReference>
<dbReference type="InterPro" id="IPR038476">
    <property type="entry name" value="UvrC_RNase_H_dom_sf"/>
</dbReference>
<dbReference type="NCBIfam" id="TIGR00194">
    <property type="entry name" value="uvrC"/>
    <property type="match status" value="1"/>
</dbReference>
<dbReference type="PANTHER" id="PTHR30562:SF1">
    <property type="entry name" value="UVRABC SYSTEM PROTEIN C"/>
    <property type="match status" value="1"/>
</dbReference>
<dbReference type="PANTHER" id="PTHR30562">
    <property type="entry name" value="UVRC/OXIDOREDUCTASE"/>
    <property type="match status" value="1"/>
</dbReference>
<dbReference type="Pfam" id="PF01541">
    <property type="entry name" value="GIY-YIG"/>
    <property type="match status" value="1"/>
</dbReference>
<dbReference type="Pfam" id="PF14520">
    <property type="entry name" value="HHH_5"/>
    <property type="match status" value="1"/>
</dbReference>
<dbReference type="Pfam" id="PF02151">
    <property type="entry name" value="UVR"/>
    <property type="match status" value="1"/>
</dbReference>
<dbReference type="Pfam" id="PF22920">
    <property type="entry name" value="UvrC_RNaseH"/>
    <property type="match status" value="1"/>
</dbReference>
<dbReference type="Pfam" id="PF08459">
    <property type="entry name" value="UvrC_RNaseH_dom"/>
    <property type="match status" value="1"/>
</dbReference>
<dbReference type="SMART" id="SM00465">
    <property type="entry name" value="GIYc"/>
    <property type="match status" value="1"/>
</dbReference>
<dbReference type="SMART" id="SM00278">
    <property type="entry name" value="HhH1"/>
    <property type="match status" value="2"/>
</dbReference>
<dbReference type="SUPFAM" id="SSF46600">
    <property type="entry name" value="C-terminal UvrC-binding domain of UvrB"/>
    <property type="match status" value="1"/>
</dbReference>
<dbReference type="SUPFAM" id="SSF82771">
    <property type="entry name" value="GIY-YIG endonuclease"/>
    <property type="match status" value="1"/>
</dbReference>
<dbReference type="SUPFAM" id="SSF47781">
    <property type="entry name" value="RuvA domain 2-like"/>
    <property type="match status" value="1"/>
</dbReference>
<dbReference type="PROSITE" id="PS50164">
    <property type="entry name" value="GIY_YIG"/>
    <property type="match status" value="1"/>
</dbReference>
<dbReference type="PROSITE" id="PS50151">
    <property type="entry name" value="UVR"/>
    <property type="match status" value="1"/>
</dbReference>
<dbReference type="PROSITE" id="PS50165">
    <property type="entry name" value="UVRC"/>
    <property type="match status" value="1"/>
</dbReference>
<name>UVRC_VIBVU</name>
<organism>
    <name type="scientific">Vibrio vulnificus (strain CMCP6)</name>
    <dbReference type="NCBI Taxonomy" id="216895"/>
    <lineage>
        <taxon>Bacteria</taxon>
        <taxon>Pseudomonadati</taxon>
        <taxon>Pseudomonadota</taxon>
        <taxon>Gammaproteobacteria</taxon>
        <taxon>Vibrionales</taxon>
        <taxon>Vibrionaceae</taxon>
        <taxon>Vibrio</taxon>
    </lineage>
</organism>
<accession>Q8D8C7</accession>
<comment type="function">
    <text evidence="1">The UvrABC repair system catalyzes the recognition and processing of DNA lesions. UvrC both incises the 5' and 3' sides of the lesion. The N-terminal half is responsible for the 3' incision and the C-terminal half is responsible for the 5' incision.</text>
</comment>
<comment type="subunit">
    <text evidence="1">Interacts with UvrB in an incision complex.</text>
</comment>
<comment type="subcellular location">
    <subcellularLocation>
        <location evidence="1">Cytoplasm</location>
    </subcellularLocation>
</comment>
<comment type="similarity">
    <text evidence="1">Belongs to the UvrC family.</text>
</comment>
<proteinExistence type="inferred from homology"/>
<gene>
    <name evidence="1" type="primary">uvrC</name>
    <name type="ordered locus">VV1_3053</name>
</gene>
<feature type="chain" id="PRO_0000138360" description="UvrABC system protein C">
    <location>
        <begin position="1"/>
        <end position="610"/>
    </location>
</feature>
<feature type="domain" description="GIY-YIG" evidence="1">
    <location>
        <begin position="16"/>
        <end position="94"/>
    </location>
</feature>
<feature type="domain" description="UVR" evidence="1">
    <location>
        <begin position="204"/>
        <end position="239"/>
    </location>
</feature>
<sequence>MTQIFDSVSFLKTVTHQPGVYRMYNAEAVVIYVGKAKDLKKRLSSYFRKKVDSEKTKALVSNIAKIDVTVTHTETEALILEHNYIKQYLPKYNVLLRDDKSYPYIFLSAHRHPRVSLHRGAKKRKGEYFGPYPDSGAVRETLHLIQKIFPVRQCEDTVYANRTRPCLMYQIGRCAGPCVSSVISDVDYAELVGYLRLFLQGKDNQVLELLVQKMEIASQQLKFEDAAKFRDQIQAIRRVQEQQYVSEDSQEDMDVLGFAQENGIACIHILMIRQGKVLGSRSHFPKIPQNTNAQEVFDSFLTQYYLSHNEARTIPSRIILNQELAADVEAIQLALSDVAGRKVQFHTSPSGSRGRYLKLSNTNALTAMTTKINHKMTINQRFKALRDVLAMDSIARMECFDISHTMGESTIASCVVFNSEGPVKQEYRRYNITGITGGDDYAAMGQALERRYAKQLDVEKIPDIIFIDGGKGQLNRAHEIIVQYWGDWPKRPVMIGIAKGVTRKPGLETLITVDGDEFHLPSDDPALHLIQHIRDESHNHAIAGHRAKRGKTRKTSALEGIEGVGPKRRQALLKYTGGLQELKRASVEEIAKVPGISHSLAEIIYQALKQ</sequence>